<organism>
    <name type="scientific">Borreliella burgdorferi (strain ATCC 35210 / DSM 4680 / CIP 102532 / B31)</name>
    <name type="common">Borrelia burgdorferi</name>
    <dbReference type="NCBI Taxonomy" id="224326"/>
    <lineage>
        <taxon>Bacteria</taxon>
        <taxon>Pseudomonadati</taxon>
        <taxon>Spirochaetota</taxon>
        <taxon>Spirochaetia</taxon>
        <taxon>Spirochaetales</taxon>
        <taxon>Borreliaceae</taxon>
        <taxon>Borreliella</taxon>
    </lineage>
</organism>
<accession>O51604</accession>
<proteinExistence type="inferred from homology"/>
<keyword id="KW-0997">Cell inner membrane</keyword>
<keyword id="KW-1003">Cell membrane</keyword>
<keyword id="KW-0963">Cytoplasm</keyword>
<keyword id="KW-0342">GTP-binding</keyword>
<keyword id="KW-0472">Membrane</keyword>
<keyword id="KW-0547">Nucleotide-binding</keyword>
<keyword id="KW-1185">Reference proteome</keyword>
<keyword id="KW-0690">Ribosome biogenesis</keyword>
<keyword id="KW-0694">RNA-binding</keyword>
<keyword id="KW-0699">rRNA-binding</keyword>
<sequence length="290" mass="33355">MKSGFAAILGRPSTGKSTLLNSICGHKISIISPIPQTTRNNIKGIFTDDRGQIIFIDTPGFHLSKKKFNIAMMKNIHSSIGEVELILYIIDIQDKPGEEENKMLEIIKNSKIKFLVILNKIDLKNTKIKEITQFLKEKGIEDSNIIKISAEKKINTEELKNKIYENFSEGPLYYPQEYYTDQEINFRISEIIREKAIENLKEELPYSLYVDIDTLENKKGSLFIRANIFVANESQKGIIVGKNGKEIKSIGERARKTIAKIFETKCNLFLQVKLKKNWNKEDKLIKRLIN</sequence>
<protein>
    <recommendedName>
        <fullName evidence="1">GTPase Era</fullName>
    </recommendedName>
</protein>
<comment type="function">
    <text evidence="1">An essential GTPase that binds both GDP and GTP, with rapid nucleotide exchange. Plays a role in 16S rRNA processing and 30S ribosomal subunit biogenesis and possibly also in cell cycle regulation and energy metabolism.</text>
</comment>
<comment type="subunit">
    <text evidence="1">Monomer.</text>
</comment>
<comment type="subcellular location">
    <subcellularLocation>
        <location>Cytoplasm</location>
    </subcellularLocation>
    <subcellularLocation>
        <location evidence="1">Cell inner membrane</location>
        <topology evidence="1">Peripheral membrane protein</topology>
    </subcellularLocation>
</comment>
<comment type="similarity">
    <text evidence="1 2">Belongs to the TRAFAC class TrmE-Era-EngA-EngB-Septin-like GTPase superfamily. Era GTPase family.</text>
</comment>
<feature type="chain" id="PRO_0000179998" description="GTPase Era">
    <location>
        <begin position="1"/>
        <end position="290"/>
    </location>
</feature>
<feature type="domain" description="Era-type G" evidence="2">
    <location>
        <begin position="2"/>
        <end position="169"/>
    </location>
</feature>
<feature type="domain" description="KH type-2" evidence="1">
    <location>
        <begin position="200"/>
        <end position="276"/>
    </location>
</feature>
<feature type="region of interest" description="G1" evidence="2">
    <location>
        <begin position="10"/>
        <end position="17"/>
    </location>
</feature>
<feature type="region of interest" description="G2" evidence="2">
    <location>
        <begin position="36"/>
        <end position="40"/>
    </location>
</feature>
<feature type="region of interest" description="G3" evidence="2">
    <location>
        <begin position="57"/>
        <end position="60"/>
    </location>
</feature>
<feature type="region of interest" description="G4" evidence="2">
    <location>
        <begin position="119"/>
        <end position="122"/>
    </location>
</feature>
<feature type="region of interest" description="G5" evidence="2">
    <location>
        <begin position="148"/>
        <end position="150"/>
    </location>
</feature>
<feature type="binding site" evidence="1">
    <location>
        <begin position="10"/>
        <end position="17"/>
    </location>
    <ligand>
        <name>GTP</name>
        <dbReference type="ChEBI" id="CHEBI:37565"/>
    </ligand>
</feature>
<feature type="binding site" evidence="1">
    <location>
        <begin position="57"/>
        <end position="61"/>
    </location>
    <ligand>
        <name>GTP</name>
        <dbReference type="ChEBI" id="CHEBI:37565"/>
    </ligand>
</feature>
<feature type="binding site" evidence="1">
    <location>
        <begin position="119"/>
        <end position="122"/>
    </location>
    <ligand>
        <name>GTP</name>
        <dbReference type="ChEBI" id="CHEBI:37565"/>
    </ligand>
</feature>
<gene>
    <name evidence="1" type="primary">era</name>
    <name type="ordered locus">BB_0660</name>
</gene>
<evidence type="ECO:0000255" key="1">
    <source>
        <dbReference type="HAMAP-Rule" id="MF_00367"/>
    </source>
</evidence>
<evidence type="ECO:0000255" key="2">
    <source>
        <dbReference type="PROSITE-ProRule" id="PRU01050"/>
    </source>
</evidence>
<name>ERA_BORBU</name>
<dbReference type="EMBL" id="AE000783">
    <property type="protein sequence ID" value="AAC67005.1"/>
    <property type="molecule type" value="Genomic_DNA"/>
</dbReference>
<dbReference type="PIR" id="C70182">
    <property type="entry name" value="C70182"/>
</dbReference>
<dbReference type="RefSeq" id="NP_212794.1">
    <property type="nucleotide sequence ID" value="NC_001318.1"/>
</dbReference>
<dbReference type="RefSeq" id="WP_002657380.1">
    <property type="nucleotide sequence ID" value="NC_001318.1"/>
</dbReference>
<dbReference type="SMR" id="O51604"/>
<dbReference type="STRING" id="224326.BB_0660"/>
<dbReference type="PaxDb" id="224326-BB_0660"/>
<dbReference type="EnsemblBacteria" id="AAC67005">
    <property type="protein sequence ID" value="AAC67005"/>
    <property type="gene ID" value="BB_0660"/>
</dbReference>
<dbReference type="GeneID" id="56567470"/>
<dbReference type="KEGG" id="bbu:BB_0660"/>
<dbReference type="PATRIC" id="fig|224326.49.peg.1051"/>
<dbReference type="HOGENOM" id="CLU_038009_1_0_12"/>
<dbReference type="OrthoDB" id="9805918at2"/>
<dbReference type="Proteomes" id="UP000001807">
    <property type="component" value="Chromosome"/>
</dbReference>
<dbReference type="GO" id="GO:0005829">
    <property type="term" value="C:cytosol"/>
    <property type="evidence" value="ECO:0007669"/>
    <property type="project" value="TreeGrafter"/>
</dbReference>
<dbReference type="GO" id="GO:0005886">
    <property type="term" value="C:plasma membrane"/>
    <property type="evidence" value="ECO:0007669"/>
    <property type="project" value="UniProtKB-SubCell"/>
</dbReference>
<dbReference type="GO" id="GO:0005525">
    <property type="term" value="F:GTP binding"/>
    <property type="evidence" value="ECO:0007669"/>
    <property type="project" value="UniProtKB-UniRule"/>
</dbReference>
<dbReference type="GO" id="GO:0003924">
    <property type="term" value="F:GTPase activity"/>
    <property type="evidence" value="ECO:0007669"/>
    <property type="project" value="UniProtKB-UniRule"/>
</dbReference>
<dbReference type="GO" id="GO:0043024">
    <property type="term" value="F:ribosomal small subunit binding"/>
    <property type="evidence" value="ECO:0007669"/>
    <property type="project" value="TreeGrafter"/>
</dbReference>
<dbReference type="GO" id="GO:0070181">
    <property type="term" value="F:small ribosomal subunit rRNA binding"/>
    <property type="evidence" value="ECO:0007669"/>
    <property type="project" value="UniProtKB-UniRule"/>
</dbReference>
<dbReference type="GO" id="GO:0000028">
    <property type="term" value="P:ribosomal small subunit assembly"/>
    <property type="evidence" value="ECO:0007669"/>
    <property type="project" value="TreeGrafter"/>
</dbReference>
<dbReference type="CDD" id="cd04163">
    <property type="entry name" value="Era"/>
    <property type="match status" value="1"/>
</dbReference>
<dbReference type="CDD" id="cd22534">
    <property type="entry name" value="KH-II_Era"/>
    <property type="match status" value="1"/>
</dbReference>
<dbReference type="Gene3D" id="3.30.300.20">
    <property type="match status" value="1"/>
</dbReference>
<dbReference type="Gene3D" id="3.40.50.300">
    <property type="entry name" value="P-loop containing nucleotide triphosphate hydrolases"/>
    <property type="match status" value="1"/>
</dbReference>
<dbReference type="HAMAP" id="MF_00367">
    <property type="entry name" value="GTPase_Era"/>
    <property type="match status" value="1"/>
</dbReference>
<dbReference type="InterPro" id="IPR030388">
    <property type="entry name" value="G_ERA_dom"/>
</dbReference>
<dbReference type="InterPro" id="IPR006073">
    <property type="entry name" value="GTP-bd"/>
</dbReference>
<dbReference type="InterPro" id="IPR005662">
    <property type="entry name" value="GTPase_Era-like"/>
</dbReference>
<dbReference type="InterPro" id="IPR015946">
    <property type="entry name" value="KH_dom-like_a/b"/>
</dbReference>
<dbReference type="InterPro" id="IPR004044">
    <property type="entry name" value="KH_dom_type_2"/>
</dbReference>
<dbReference type="InterPro" id="IPR009019">
    <property type="entry name" value="KH_sf_prok-type"/>
</dbReference>
<dbReference type="InterPro" id="IPR027417">
    <property type="entry name" value="P-loop_NTPase"/>
</dbReference>
<dbReference type="InterPro" id="IPR005225">
    <property type="entry name" value="Small_GTP-bd"/>
</dbReference>
<dbReference type="NCBIfam" id="TIGR00436">
    <property type="entry name" value="era"/>
    <property type="match status" value="1"/>
</dbReference>
<dbReference type="NCBIfam" id="NF000908">
    <property type="entry name" value="PRK00089.1"/>
    <property type="match status" value="1"/>
</dbReference>
<dbReference type="NCBIfam" id="TIGR00231">
    <property type="entry name" value="small_GTP"/>
    <property type="match status" value="1"/>
</dbReference>
<dbReference type="PANTHER" id="PTHR42698">
    <property type="entry name" value="GTPASE ERA"/>
    <property type="match status" value="1"/>
</dbReference>
<dbReference type="PANTHER" id="PTHR42698:SF1">
    <property type="entry name" value="GTPASE ERA, MITOCHONDRIAL"/>
    <property type="match status" value="1"/>
</dbReference>
<dbReference type="Pfam" id="PF07650">
    <property type="entry name" value="KH_2"/>
    <property type="match status" value="1"/>
</dbReference>
<dbReference type="Pfam" id="PF01926">
    <property type="entry name" value="MMR_HSR1"/>
    <property type="match status" value="1"/>
</dbReference>
<dbReference type="SUPFAM" id="SSF52540">
    <property type="entry name" value="P-loop containing nucleoside triphosphate hydrolases"/>
    <property type="match status" value="1"/>
</dbReference>
<dbReference type="SUPFAM" id="SSF54814">
    <property type="entry name" value="Prokaryotic type KH domain (KH-domain type II)"/>
    <property type="match status" value="1"/>
</dbReference>
<dbReference type="PROSITE" id="PS51713">
    <property type="entry name" value="G_ERA"/>
    <property type="match status" value="1"/>
</dbReference>
<dbReference type="PROSITE" id="PS50823">
    <property type="entry name" value="KH_TYPE_2"/>
    <property type="match status" value="1"/>
</dbReference>
<reference key="1">
    <citation type="journal article" date="1997" name="Nature">
        <title>Genomic sequence of a Lyme disease spirochaete, Borrelia burgdorferi.</title>
        <authorList>
            <person name="Fraser C.M."/>
            <person name="Casjens S."/>
            <person name="Huang W.M."/>
            <person name="Sutton G.G."/>
            <person name="Clayton R.A."/>
            <person name="Lathigra R."/>
            <person name="White O."/>
            <person name="Ketchum K.A."/>
            <person name="Dodson R.J."/>
            <person name="Hickey E.K."/>
            <person name="Gwinn M.L."/>
            <person name="Dougherty B.A."/>
            <person name="Tomb J.-F."/>
            <person name="Fleischmann R.D."/>
            <person name="Richardson D.L."/>
            <person name="Peterson J.D."/>
            <person name="Kerlavage A.R."/>
            <person name="Quackenbush J."/>
            <person name="Salzberg S.L."/>
            <person name="Hanson M."/>
            <person name="van Vugt R."/>
            <person name="Palmer N."/>
            <person name="Adams M.D."/>
            <person name="Gocayne J.D."/>
            <person name="Weidman J.F."/>
            <person name="Utterback T.R."/>
            <person name="Watthey L."/>
            <person name="McDonald L.A."/>
            <person name="Artiach P."/>
            <person name="Bowman C."/>
            <person name="Garland S.A."/>
            <person name="Fujii C."/>
            <person name="Cotton M.D."/>
            <person name="Horst K."/>
            <person name="Roberts K.M."/>
            <person name="Hatch B."/>
            <person name="Smith H.O."/>
            <person name="Venter J.C."/>
        </authorList>
    </citation>
    <scope>NUCLEOTIDE SEQUENCE [LARGE SCALE GENOMIC DNA]</scope>
    <source>
        <strain>ATCC 35210 / DSM 4680 / CIP 102532 / B31</strain>
    </source>
</reference>